<comment type="function">
    <text>Controls the nucleo-mitochondrial dependence of galactose, maltose and raffinose utilization. Becomes essential in the absence of functioning mitochondria.</text>
</comment>
<comment type="miscellaneous">
    <text evidence="2">Present with 5110 molecules/cell in log phase SD medium.</text>
</comment>
<name>IMPX_YEAST</name>
<gene>
    <name type="primary">IMP2'</name>
    <name type="synonym">IMP2</name>
    <name type="ordered locus">YIL154C</name>
</gene>
<protein>
    <recommendedName>
        <fullName>Sugar utilization regulatory protein IMP2</fullName>
    </recommendedName>
</protein>
<sequence>MQKSILLTKPDGTQSNLHSIKTETPTTVEFDSEQMERGHRERGRSKKKRGERDSNVSSLSRSRSRASSRSRVREEEFLKWTVLRQDPSMRLRVVDVDSEEEGEGNDEDDDDGDGDDMDEEESDEEQVSDIENDLEIDEEFHYDLGMKVLPNFCTSINEVLDSSKPWIAKYEISIRGHENEDVSLEQLDGGYVRAMQLLTKGAGAEAGNQRSFILYTDLSSESTYALTYLMGAAVNQGDTVYIVHWEPSKPTDDSQMFANVARIRKHVMHLFDCVAGVLDDLDVVVLSLTHPYPKHLLNEMIHGLKPVALCCSLSVILSTLQNFVCSVPILAVRKKLKRAKRKGISE</sequence>
<accession>P32351</accession>
<accession>D6VVD3</accession>
<evidence type="ECO:0000256" key="1">
    <source>
        <dbReference type="SAM" id="MobiDB-lite"/>
    </source>
</evidence>
<evidence type="ECO:0000269" key="2">
    <source>
    </source>
</evidence>
<evidence type="ECO:0000305" key="3"/>
<evidence type="ECO:0007744" key="4">
    <source>
    </source>
</evidence>
<proteinExistence type="evidence at protein level"/>
<feature type="chain" id="PRO_0000084187" description="Sugar utilization regulatory protein IMP2">
    <location>
        <begin position="1"/>
        <end position="346"/>
    </location>
</feature>
<feature type="region of interest" description="Disordered" evidence="1">
    <location>
        <begin position="1"/>
        <end position="74"/>
    </location>
</feature>
<feature type="region of interest" description="Disordered" evidence="1">
    <location>
        <begin position="91"/>
        <end position="132"/>
    </location>
</feature>
<feature type="compositionally biased region" description="Polar residues" evidence="1">
    <location>
        <begin position="1"/>
        <end position="29"/>
    </location>
</feature>
<feature type="compositionally biased region" description="Basic residues" evidence="1">
    <location>
        <begin position="40"/>
        <end position="49"/>
    </location>
</feature>
<feature type="compositionally biased region" description="Acidic residues" evidence="1">
    <location>
        <begin position="96"/>
        <end position="132"/>
    </location>
</feature>
<feature type="modified residue" description="Phosphothreonine" evidence="4">
    <location>
        <position position="24"/>
    </location>
</feature>
<feature type="sequence conflict" description="In Ref. 1; CAA43930." evidence="3" ref="1">
    <original>D</original>
    <variation>G</variation>
    <location>
        <position position="181"/>
    </location>
</feature>
<feature type="sequence conflict" description="In Ref. 1; CAA43930." evidence="3" ref="1">
    <original>D</original>
    <variation>H</variation>
    <location>
        <position position="279"/>
    </location>
</feature>
<feature type="sequence conflict" description="In Ref. 1; CAA43930." evidence="3" ref="1">
    <original>D</original>
    <variation>H</variation>
    <location>
        <position position="282"/>
    </location>
</feature>
<keyword id="KW-0597">Phosphoprotein</keyword>
<keyword id="KW-1185">Reference proteome</keyword>
<dbReference type="EMBL" id="Z38059">
    <property type="protein sequence ID" value="CAA86124.1"/>
    <property type="molecule type" value="Genomic_DNA"/>
</dbReference>
<dbReference type="EMBL" id="X61928">
    <property type="protein sequence ID" value="CAA43930.1"/>
    <property type="molecule type" value="Genomic_DNA"/>
</dbReference>
<dbReference type="EMBL" id="BK006942">
    <property type="protein sequence ID" value="DAA08399.1"/>
    <property type="molecule type" value="Genomic_DNA"/>
</dbReference>
<dbReference type="PIR" id="S48380">
    <property type="entry name" value="S48380"/>
</dbReference>
<dbReference type="RefSeq" id="NP_012112.3">
    <property type="nucleotide sequence ID" value="NM_001179502.3"/>
</dbReference>
<dbReference type="BioGRID" id="34838">
    <property type="interactions" value="197"/>
</dbReference>
<dbReference type="DIP" id="DIP-5664N"/>
<dbReference type="FunCoup" id="P32351">
    <property type="interactions" value="123"/>
</dbReference>
<dbReference type="IntAct" id="P32351">
    <property type="interactions" value="12"/>
</dbReference>
<dbReference type="MINT" id="P32351"/>
<dbReference type="STRING" id="4932.YIL154C"/>
<dbReference type="iPTMnet" id="P32351"/>
<dbReference type="PaxDb" id="4932-YIL154C"/>
<dbReference type="PeptideAtlas" id="P32351"/>
<dbReference type="EnsemblFungi" id="YIL154C_mRNA">
    <property type="protein sequence ID" value="YIL154C"/>
    <property type="gene ID" value="YIL154C"/>
</dbReference>
<dbReference type="GeneID" id="854652"/>
<dbReference type="KEGG" id="sce:YIL154C"/>
<dbReference type="AGR" id="SGD:S000001416"/>
<dbReference type="SGD" id="S000001416">
    <property type="gene designation" value="IMP2'"/>
</dbReference>
<dbReference type="VEuPathDB" id="FungiDB:YIL154C"/>
<dbReference type="eggNOG" id="ENOG502QVSA">
    <property type="taxonomic scope" value="Eukaryota"/>
</dbReference>
<dbReference type="HOGENOM" id="CLU_044106_0_0_1"/>
<dbReference type="InParanoid" id="P32351"/>
<dbReference type="OMA" id="IVHWEPS"/>
<dbReference type="OrthoDB" id="992776at2759"/>
<dbReference type="BioCyc" id="YEAST:G3O-31403-MONOMER"/>
<dbReference type="BioGRID-ORCS" id="854652">
    <property type="hits" value="2 hits in 10 CRISPR screens"/>
</dbReference>
<dbReference type="PRO" id="PR:P32351"/>
<dbReference type="Proteomes" id="UP000002311">
    <property type="component" value="Chromosome IX"/>
</dbReference>
<dbReference type="RNAct" id="P32351">
    <property type="molecule type" value="protein"/>
</dbReference>
<dbReference type="GO" id="GO:0005737">
    <property type="term" value="C:cytoplasm"/>
    <property type="evidence" value="ECO:0007005"/>
    <property type="project" value="SGD"/>
</dbReference>
<dbReference type="GO" id="GO:0003713">
    <property type="term" value="F:transcription coactivator activity"/>
    <property type="evidence" value="ECO:0000314"/>
    <property type="project" value="SGD"/>
</dbReference>
<dbReference type="GO" id="GO:0006357">
    <property type="term" value="P:regulation of transcription by RNA polymerase II"/>
    <property type="evidence" value="ECO:0000315"/>
    <property type="project" value="SGD"/>
</dbReference>
<organism>
    <name type="scientific">Saccharomyces cerevisiae (strain ATCC 204508 / S288c)</name>
    <name type="common">Baker's yeast</name>
    <dbReference type="NCBI Taxonomy" id="559292"/>
    <lineage>
        <taxon>Eukaryota</taxon>
        <taxon>Fungi</taxon>
        <taxon>Dikarya</taxon>
        <taxon>Ascomycota</taxon>
        <taxon>Saccharomycotina</taxon>
        <taxon>Saccharomycetes</taxon>
        <taxon>Saccharomycetales</taxon>
        <taxon>Saccharomycetaceae</taxon>
        <taxon>Saccharomyces</taxon>
    </lineage>
</organism>
<reference key="1">
    <citation type="journal article" date="1992" name="Yeast">
        <title>IMP2, a nuclear gene controlling the mitochondrial dependence of galactose, maltose and raffinose utilization in Saccharomyces cerevisiae.</title>
        <authorList>
            <person name="Donnini C."/>
            <person name="Lodi T."/>
            <person name="Ferrero I."/>
            <person name="Puglisi P.P."/>
        </authorList>
    </citation>
    <scope>NUCLEOTIDE SEQUENCE [GENOMIC DNA] OF 35-346</scope>
</reference>
<reference key="2">
    <citation type="journal article" date="1997" name="Nature">
        <title>The nucleotide sequence of Saccharomyces cerevisiae chromosome IX.</title>
        <authorList>
            <person name="Churcher C.M."/>
            <person name="Bowman S."/>
            <person name="Badcock K."/>
            <person name="Bankier A.T."/>
            <person name="Brown D."/>
            <person name="Chillingworth T."/>
            <person name="Connor R."/>
            <person name="Devlin K."/>
            <person name="Gentles S."/>
            <person name="Hamlin N."/>
            <person name="Harris D.E."/>
            <person name="Horsnell T."/>
            <person name="Hunt S."/>
            <person name="Jagels K."/>
            <person name="Jones M."/>
            <person name="Lye G."/>
            <person name="Moule S."/>
            <person name="Odell C."/>
            <person name="Pearson D."/>
            <person name="Rajandream M.A."/>
            <person name="Rice P."/>
            <person name="Rowley N."/>
            <person name="Skelton J."/>
            <person name="Smith V."/>
            <person name="Walsh S.V."/>
            <person name="Whitehead S."/>
            <person name="Barrell B.G."/>
        </authorList>
    </citation>
    <scope>NUCLEOTIDE SEQUENCE [LARGE SCALE GENOMIC DNA]</scope>
    <source>
        <strain>ATCC 204508 / S288c</strain>
    </source>
</reference>
<reference key="3">
    <citation type="journal article" date="2014" name="G3 (Bethesda)">
        <title>The reference genome sequence of Saccharomyces cerevisiae: Then and now.</title>
        <authorList>
            <person name="Engel S.R."/>
            <person name="Dietrich F.S."/>
            <person name="Fisk D.G."/>
            <person name="Binkley G."/>
            <person name="Balakrishnan R."/>
            <person name="Costanzo M.C."/>
            <person name="Dwight S.S."/>
            <person name="Hitz B.C."/>
            <person name="Karra K."/>
            <person name="Nash R.S."/>
            <person name="Weng S."/>
            <person name="Wong E.D."/>
            <person name="Lloyd P."/>
            <person name="Skrzypek M.S."/>
            <person name="Miyasato S.R."/>
            <person name="Simison M."/>
            <person name="Cherry J.M."/>
        </authorList>
    </citation>
    <scope>GENOME REANNOTATION</scope>
    <source>
        <strain>ATCC 204508 / S288c</strain>
    </source>
</reference>
<reference key="4">
    <citation type="journal article" date="2003" name="Nature">
        <title>Global analysis of protein expression in yeast.</title>
        <authorList>
            <person name="Ghaemmaghami S."/>
            <person name="Huh W.-K."/>
            <person name="Bower K."/>
            <person name="Howson R.W."/>
            <person name="Belle A."/>
            <person name="Dephoure N."/>
            <person name="O'Shea E.K."/>
            <person name="Weissman J.S."/>
        </authorList>
    </citation>
    <scope>LEVEL OF PROTEIN EXPRESSION [LARGE SCALE ANALYSIS]</scope>
</reference>
<reference key="5">
    <citation type="journal article" date="2007" name="J. Proteome Res.">
        <title>Large-scale phosphorylation analysis of alpha-factor-arrested Saccharomyces cerevisiae.</title>
        <authorList>
            <person name="Li X."/>
            <person name="Gerber S.A."/>
            <person name="Rudner A.D."/>
            <person name="Beausoleil S.A."/>
            <person name="Haas W."/>
            <person name="Villen J."/>
            <person name="Elias J.E."/>
            <person name="Gygi S.P."/>
        </authorList>
    </citation>
    <scope>PHOSPHORYLATION [LARGE SCALE ANALYSIS] AT THR-24</scope>
    <scope>IDENTIFICATION BY MASS SPECTROMETRY [LARGE SCALE ANALYSIS]</scope>
    <source>
        <strain>ADR376</strain>
    </source>
</reference>